<feature type="chain" id="PRO_0000197754" description="Blue-sensitive opsin">
    <location>
        <begin position="1"/>
        <end position="355"/>
    </location>
</feature>
<feature type="topological domain" description="Extracellular" evidence="2">
    <location>
        <begin position="1"/>
        <end position="41"/>
    </location>
</feature>
<feature type="transmembrane region" description="Helical; Name=1" evidence="2">
    <location>
        <begin position="42"/>
        <end position="66"/>
    </location>
</feature>
<feature type="topological domain" description="Cytoplasmic" evidence="2">
    <location>
        <begin position="67"/>
        <end position="78"/>
    </location>
</feature>
<feature type="transmembrane region" description="Helical; Name=2" evidence="2">
    <location>
        <begin position="79"/>
        <end position="104"/>
    </location>
</feature>
<feature type="topological domain" description="Extracellular" evidence="2">
    <location>
        <begin position="105"/>
        <end position="118"/>
    </location>
</feature>
<feature type="transmembrane region" description="Helical; Name=3" evidence="2">
    <location>
        <begin position="119"/>
        <end position="138"/>
    </location>
</feature>
<feature type="topological domain" description="Cytoplasmic" evidence="2">
    <location>
        <begin position="139"/>
        <end position="157"/>
    </location>
</feature>
<feature type="transmembrane region" description="Helical; Name=4" evidence="2">
    <location>
        <begin position="158"/>
        <end position="181"/>
    </location>
</feature>
<feature type="topological domain" description="Extracellular" evidence="2">
    <location>
        <begin position="182"/>
        <end position="207"/>
    </location>
</feature>
<feature type="transmembrane region" description="Helical; Name=5" evidence="2">
    <location>
        <begin position="208"/>
        <end position="235"/>
    </location>
</feature>
<feature type="topological domain" description="Cytoplasmic" evidence="2">
    <location>
        <begin position="236"/>
        <end position="257"/>
    </location>
</feature>
<feature type="transmembrane region" description="Helical; Name=6" evidence="2">
    <location>
        <begin position="258"/>
        <end position="281"/>
    </location>
</feature>
<feature type="topological domain" description="Extracellular" evidence="2">
    <location>
        <begin position="282"/>
        <end position="289"/>
    </location>
</feature>
<feature type="transmembrane region" description="Helical; Name=7" evidence="2">
    <location>
        <begin position="290"/>
        <end position="314"/>
    </location>
</feature>
<feature type="topological domain" description="Cytoplasmic" evidence="2">
    <location>
        <begin position="315"/>
        <end position="355"/>
    </location>
</feature>
<feature type="region of interest" description="Disordered" evidence="4">
    <location>
        <begin position="334"/>
        <end position="355"/>
    </location>
</feature>
<feature type="compositionally biased region" description="Low complexity" evidence="4">
    <location>
        <begin position="340"/>
        <end position="355"/>
    </location>
</feature>
<feature type="modified residue" description="N6-(retinylidene)lysine" evidence="1">
    <location>
        <position position="301"/>
    </location>
</feature>
<feature type="glycosylation site" description="N-linked (GlcNAc...) asparagine" evidence="2">
    <location>
        <position position="22"/>
    </location>
</feature>
<feature type="glycosylation site" description="N-linked (GlcNAc...) asparagine" evidence="2">
    <location>
        <position position="205"/>
    </location>
</feature>
<feature type="disulfide bond" evidence="3">
    <location>
        <begin position="115"/>
        <end position="192"/>
    </location>
</feature>
<accession>P51472</accession>
<comment type="function">
    <text>Visual pigments are the light-absorbing molecules that mediate vision. They consist of an apoprotein, opsin, covalently linked to cis-retinal.</text>
</comment>
<comment type="subcellular location">
    <subcellularLocation>
        <location>Membrane</location>
        <topology>Multi-pass membrane protein</topology>
    </subcellularLocation>
</comment>
<comment type="tissue specificity">
    <text>The color pigments are found in the cone photoreceptor cells.</text>
</comment>
<comment type="PTM">
    <text evidence="1">Phosphorylated on some or all of the serine and threonine residues present in the C-terminal region.</text>
</comment>
<comment type="similarity">
    <text evidence="3">Belongs to the G-protein coupled receptor 1 family. Opsin subfamily.</text>
</comment>
<sequence>MKSRPQEFQEDFYIPIPLDTNNITALSPFLVPQDHLGGSGIFMIMTVFMLFLFIGGTSINVLTIVCTVQYKKLRSHLNYILVNLAISNLLVSTVGSFTAFVSFLNRYFIFGPTACKIEGFVATLGGMVSLWSLSVVAFERWLVICKPVGNFSFKGTHAIIGCALTWFFALLASTPPLFGWSRYIPEGLQCSCGPDWYTTENKYNNESYVMFLFCFCFGFPFTVILFCYGQLLFTLKSAAKAQADSASTQKAEREVTKMVVVMVMGFLVCWLPYASFALWVVFNRGQSFDLRLGTIPSCFSKASTVYNPVIYVFMNKQFRSCMMKLIFCGKSPFGDDEEASSSSQVTQVSSVGPEK</sequence>
<evidence type="ECO:0000250" key="1"/>
<evidence type="ECO:0000255" key="2"/>
<evidence type="ECO:0000255" key="3">
    <source>
        <dbReference type="PROSITE-ProRule" id="PRU00521"/>
    </source>
</evidence>
<evidence type="ECO:0000256" key="4">
    <source>
        <dbReference type="SAM" id="MobiDB-lite"/>
    </source>
</evidence>
<protein>
    <recommendedName>
        <fullName>Blue-sensitive opsin</fullName>
    </recommendedName>
    <alternativeName>
        <fullName>Blue cone photoreceptor pigment</fullName>
    </alternativeName>
</protein>
<dbReference type="EMBL" id="AF134766">
    <property type="protein sequence ID" value="AAB28911.1"/>
    <property type="molecule type" value="Genomic_DNA"/>
</dbReference>
<dbReference type="EMBL" id="AF134762">
    <property type="protein sequence ID" value="AAB28911.1"/>
    <property type="status" value="JOINED"/>
    <property type="molecule type" value="Genomic_DNA"/>
</dbReference>
<dbReference type="EMBL" id="AF134763">
    <property type="protein sequence ID" value="AAB28911.1"/>
    <property type="status" value="JOINED"/>
    <property type="molecule type" value="Genomic_DNA"/>
</dbReference>
<dbReference type="EMBL" id="AF134764">
    <property type="protein sequence ID" value="AAB28911.1"/>
    <property type="status" value="JOINED"/>
    <property type="molecule type" value="Genomic_DNA"/>
</dbReference>
<dbReference type="EMBL" id="AF134765">
    <property type="protein sequence ID" value="AAB28911.1"/>
    <property type="status" value="JOINED"/>
    <property type="molecule type" value="Genomic_DNA"/>
</dbReference>
<dbReference type="PIR" id="S39028">
    <property type="entry name" value="S39028"/>
</dbReference>
<dbReference type="SMR" id="P51472"/>
<dbReference type="GlyCosmos" id="P51472">
    <property type="glycosylation" value="2 sites, No reported glycans"/>
</dbReference>
<dbReference type="GO" id="GO:0016020">
    <property type="term" value="C:membrane"/>
    <property type="evidence" value="ECO:0007669"/>
    <property type="project" value="UniProtKB-SubCell"/>
</dbReference>
<dbReference type="GO" id="GO:0004930">
    <property type="term" value="F:G protein-coupled receptor activity"/>
    <property type="evidence" value="ECO:0007669"/>
    <property type="project" value="UniProtKB-KW"/>
</dbReference>
<dbReference type="GO" id="GO:0009881">
    <property type="term" value="F:photoreceptor activity"/>
    <property type="evidence" value="ECO:0007669"/>
    <property type="project" value="UniProtKB-KW"/>
</dbReference>
<dbReference type="GO" id="GO:0007602">
    <property type="term" value="P:phototransduction"/>
    <property type="evidence" value="ECO:0007669"/>
    <property type="project" value="UniProtKB-KW"/>
</dbReference>
<dbReference type="GO" id="GO:0007601">
    <property type="term" value="P:visual perception"/>
    <property type="evidence" value="ECO:0007669"/>
    <property type="project" value="UniProtKB-KW"/>
</dbReference>
<dbReference type="FunFam" id="1.20.1070.10:FF:000018">
    <property type="entry name" value="Rhodopsin"/>
    <property type="match status" value="1"/>
</dbReference>
<dbReference type="Gene3D" id="1.20.1070.10">
    <property type="entry name" value="Rhodopsin 7-helix transmembrane proteins"/>
    <property type="match status" value="1"/>
</dbReference>
<dbReference type="InterPro" id="IPR050125">
    <property type="entry name" value="GPCR_opsins"/>
</dbReference>
<dbReference type="InterPro" id="IPR000276">
    <property type="entry name" value="GPCR_Rhodpsn"/>
</dbReference>
<dbReference type="InterPro" id="IPR017452">
    <property type="entry name" value="GPCR_Rhodpsn_7TM"/>
</dbReference>
<dbReference type="InterPro" id="IPR001760">
    <property type="entry name" value="Opsin"/>
</dbReference>
<dbReference type="InterPro" id="IPR001521">
    <property type="entry name" value="Opsin_blue"/>
</dbReference>
<dbReference type="InterPro" id="IPR027430">
    <property type="entry name" value="Retinal_BS"/>
</dbReference>
<dbReference type="PANTHER" id="PTHR24240">
    <property type="entry name" value="OPSIN"/>
    <property type="match status" value="1"/>
</dbReference>
<dbReference type="Pfam" id="PF00001">
    <property type="entry name" value="7tm_1"/>
    <property type="match status" value="1"/>
</dbReference>
<dbReference type="PRINTS" id="PR00237">
    <property type="entry name" value="GPCRRHODOPSN"/>
</dbReference>
<dbReference type="PRINTS" id="PR00238">
    <property type="entry name" value="OPSIN"/>
</dbReference>
<dbReference type="PRINTS" id="PR00574">
    <property type="entry name" value="OPSINBLUE"/>
</dbReference>
<dbReference type="SUPFAM" id="SSF81321">
    <property type="entry name" value="Family A G protein-coupled receptor-like"/>
    <property type="match status" value="1"/>
</dbReference>
<dbReference type="PROSITE" id="PS00237">
    <property type="entry name" value="G_PROTEIN_RECEP_F1_1"/>
    <property type="match status" value="1"/>
</dbReference>
<dbReference type="PROSITE" id="PS50262">
    <property type="entry name" value="G_PROTEIN_RECEP_F1_2"/>
    <property type="match status" value="1"/>
</dbReference>
<dbReference type="PROSITE" id="PS00238">
    <property type="entry name" value="OPSIN"/>
    <property type="match status" value="1"/>
</dbReference>
<keyword id="KW-0157">Chromophore</keyword>
<keyword id="KW-1015">Disulfide bond</keyword>
<keyword id="KW-0297">G-protein coupled receptor</keyword>
<keyword id="KW-0325">Glycoprotein</keyword>
<keyword id="KW-0472">Membrane</keyword>
<keyword id="KW-0597">Phosphoprotein</keyword>
<keyword id="KW-0600">Photoreceptor protein</keyword>
<keyword id="KW-0675">Receptor</keyword>
<keyword id="KW-0681">Retinal protein</keyword>
<keyword id="KW-0716">Sensory transduction</keyword>
<keyword id="KW-0807">Transducer</keyword>
<keyword id="KW-0812">Transmembrane</keyword>
<keyword id="KW-1133">Transmembrane helix</keyword>
<keyword id="KW-0844">Vision</keyword>
<reference key="1">
    <citation type="journal article" date="1993" name="FEBS Lett.">
        <title>Molecular characterization of a blue visual pigment gene in the fish Astyanax fasciatus.</title>
        <authorList>
            <person name="Yokoyama R."/>
            <person name="Yokoyama S."/>
        </authorList>
    </citation>
    <scope>NUCLEOTIDE SEQUENCE [GENOMIC DNA]</scope>
    <source>
        <tissue>Eye</tissue>
    </source>
</reference>
<proteinExistence type="evidence at transcript level"/>
<name>OPSB_PSAFA</name>
<organism>
    <name type="scientific">Psalidodon fasciatus</name>
    <name type="common">Banded astyanax</name>
    <name type="synonym">Astyanax fasciatus</name>
    <dbReference type="NCBI Taxonomy" id="223369"/>
    <lineage>
        <taxon>Eukaryota</taxon>
        <taxon>Metazoa</taxon>
        <taxon>Chordata</taxon>
        <taxon>Craniata</taxon>
        <taxon>Vertebrata</taxon>
        <taxon>Euteleostomi</taxon>
        <taxon>Actinopterygii</taxon>
        <taxon>Neopterygii</taxon>
        <taxon>Teleostei</taxon>
        <taxon>Ostariophysi</taxon>
        <taxon>Characiformes</taxon>
        <taxon>Characoidei</taxon>
        <taxon>Acestrorhamphidae</taxon>
        <taxon>Acestrorhamphidae polyphyletic genera</taxon>
        <taxon>Psalidodon</taxon>
    </lineage>
</organism>
<gene>
    <name type="primary">B23</name>
</gene>